<gene>
    <name type="primary">Kif1c</name>
    <name type="synonym">Kif1d</name>
</gene>
<feature type="chain" id="PRO_0000125412" description="Kinesin-like protein KIF1C">
    <location>
        <begin position="1"/>
        <end position="1097"/>
    </location>
</feature>
<feature type="domain" description="Kinesin motor" evidence="3">
    <location>
        <begin position="5"/>
        <end position="347"/>
    </location>
</feature>
<feature type="domain" description="FHA">
    <location>
        <begin position="520"/>
        <end position="587"/>
    </location>
</feature>
<feature type="region of interest" description="Disordered" evidence="4">
    <location>
        <begin position="397"/>
        <end position="434"/>
    </location>
</feature>
<feature type="region of interest" description="Disordered" evidence="4">
    <location>
        <begin position="897"/>
        <end position="921"/>
    </location>
</feature>
<feature type="region of interest" description="Disordered" evidence="4">
    <location>
        <begin position="946"/>
        <end position="1097"/>
    </location>
</feature>
<feature type="coiled-coil region" evidence="2">
    <location>
        <begin position="358"/>
        <end position="380"/>
    </location>
</feature>
<feature type="coiled-coil region" evidence="2">
    <location>
        <begin position="437"/>
        <end position="478"/>
    </location>
</feature>
<feature type="coiled-coil region" evidence="2">
    <location>
        <begin position="630"/>
        <end position="671"/>
    </location>
</feature>
<feature type="coiled-coil region" evidence="2">
    <location>
        <begin position="824"/>
        <end position="868"/>
    </location>
</feature>
<feature type="compositionally biased region" description="Pro residues" evidence="4">
    <location>
        <begin position="404"/>
        <end position="418"/>
    </location>
</feature>
<feature type="compositionally biased region" description="Gly residues" evidence="4">
    <location>
        <begin position="949"/>
        <end position="958"/>
    </location>
</feature>
<feature type="compositionally biased region" description="Pro residues" evidence="4">
    <location>
        <begin position="997"/>
        <end position="1015"/>
    </location>
</feature>
<feature type="compositionally biased region" description="Basic residues" evidence="4">
    <location>
        <begin position="1016"/>
        <end position="1026"/>
    </location>
</feature>
<feature type="compositionally biased region" description="Pro residues" evidence="4">
    <location>
        <begin position="1059"/>
        <end position="1077"/>
    </location>
</feature>
<feature type="compositionally biased region" description="Basic and acidic residues" evidence="4">
    <location>
        <begin position="1086"/>
        <end position="1097"/>
    </location>
</feature>
<feature type="binding site" evidence="3">
    <location>
        <begin position="96"/>
        <end position="103"/>
    </location>
    <ligand>
        <name>ATP</name>
        <dbReference type="ChEBI" id="CHEBI:30616"/>
    </ligand>
</feature>
<feature type="modified residue" description="Phosphoserine" evidence="1">
    <location>
        <position position="294"/>
    </location>
</feature>
<feature type="modified residue" description="Phosphoserine" evidence="1">
    <location>
        <position position="491"/>
    </location>
</feature>
<feature type="modified residue" description="Phosphoserine" evidence="6">
    <location>
        <position position="671"/>
    </location>
</feature>
<feature type="modified residue" description="Phosphoserine" evidence="6">
    <location>
        <position position="673"/>
    </location>
</feature>
<feature type="modified residue" description="Phosphoserine" evidence="1">
    <location>
        <position position="911"/>
    </location>
</feature>
<feature type="modified residue" description="Phosphoserine" evidence="6">
    <location>
        <position position="1028"/>
    </location>
</feature>
<feature type="modified residue" description="Omega-N-methylarginine" evidence="1">
    <location>
        <position position="1036"/>
    </location>
</feature>
<feature type="modified residue" description="Phosphothreonine" evidence="1">
    <location>
        <position position="1077"/>
    </location>
</feature>
<feature type="modified residue" description="Phosphoserine" evidence="1">
    <location>
        <position position="1086"/>
    </location>
</feature>
<name>KIF1C_RAT</name>
<keyword id="KW-0067">ATP-binding</keyword>
<keyword id="KW-0175">Coiled coil</keyword>
<keyword id="KW-0963">Cytoplasm</keyword>
<keyword id="KW-0206">Cytoskeleton</keyword>
<keyword id="KW-0488">Methylation</keyword>
<keyword id="KW-0493">Microtubule</keyword>
<keyword id="KW-0505">Motor protein</keyword>
<keyword id="KW-0547">Nucleotide-binding</keyword>
<keyword id="KW-0597">Phosphoprotein</keyword>
<keyword id="KW-1185">Reference proteome</keyword>
<accession>O35787</accession>
<sequence length="1097" mass="122334">MAGASVKVAVRVRPFNARETSQDAKCVVSMQGNTTSIINPKQSRMFLKASFDYSYWSHTSVEDPQFASQQQVYRDIGEEMLLHAFEGYNVCIFAYGQTGAGKSYTMMGRQEPGQQGIVPQLCEDLFSRVNVNQSAQLSYSVEVSYMEIYCERVRDLLNPKSRGSLRVREHPILGPYVQDLSKLAVTSYADIADLMDCGNKARTVAATNMNETSSRSHAVFTIVFTQRSHDQLTGLDSEKVSKISLVNLAGSERADSSGARGMRLKEGANINKSLTTLGKVISALADLQSKKRKSDFIPYRDSVLTWLLKENLGGNSRTAMIAALSPADINYEETLSTLRYADRTKQIRCNAVINEDPNARLIRELQEEVARLRELLMAQGLSASALGGLKVEEGSPGGVLPAASSPPAPASPSSPPPHNGELEPSFSPSAEPQIGPEEAMERLQETEKIIAELNETWEEKLRKTEALRMEREALLAEMGSPGGWRTVGVFSPKKTPHLVNLNEDPLMSECLLYHIKDGVTRVGQVDVDIKLTGQFIREQHCLFRSIPQPDGEVMVTLEPCEGAETYVNGKLVTEPLVLKSGNRIVMGKNHVFRFNHPEQARLERERGVPPPPGPPSEPVDWNFAQKDWLEQQGIDIKLEMEKRLQDLENQYRKEKEEADLLLEQQRLYADSDSGEDSDKRSCEESWRLISSLRDELPPNTVQTIVKRCGLPSSGKRRAPRRVYQIPQRRRLQGKDPRWATMADLKMQAVKEICYEVALADFRHGRAEIEALAALKMRELCRTYGKPEGPGDAWRAVARDVWDTVGEEEGCGGGGGGGEEGARGAEVEDLRAHIDKLTGILQEVKLQNSSKDRELQALRDRMLRMERVIPLTQDLEDDNEESGLVTWAPPEGSEAVEEAVSNDHSPAVRPSSPPQSSWERVSRLMEEDPAFRRGRLRWLKQEQLRLQGLQGSGGRGGGLRRPPARFVPPHDCKLRFPFKSNPQHRESWPGMGSGEAPGPQPPEEVTAPPPPPNRRPPSPRRPHRPRRNSLDGGSRSRGGGSTQPEPQHLRPQKHNSYPQQPQPYPAQRPGPRYPPYTTPPRMRRQRSAPDLKESGAAV</sequence>
<comment type="function">
    <text>Probable motor protein.</text>
</comment>
<comment type="subcellular location">
    <subcellularLocation>
        <location evidence="5">Cytoplasm</location>
        <location evidence="5">Cytoskeleton</location>
    </subcellularLocation>
</comment>
<comment type="similarity">
    <text evidence="3">Belongs to the TRAFAC class myosin-kinesin ATPase superfamily. Kinesin family. Unc-104 subfamily.</text>
</comment>
<protein>
    <recommendedName>
        <fullName>Kinesin-like protein KIF1C</fullName>
    </recommendedName>
    <alternativeName>
        <fullName>Kinesin-like protein KIF1D</fullName>
    </alternativeName>
</protein>
<evidence type="ECO:0000250" key="1">
    <source>
        <dbReference type="UniProtKB" id="O43896"/>
    </source>
</evidence>
<evidence type="ECO:0000255" key="2"/>
<evidence type="ECO:0000255" key="3">
    <source>
        <dbReference type="PROSITE-ProRule" id="PRU00283"/>
    </source>
</evidence>
<evidence type="ECO:0000256" key="4">
    <source>
        <dbReference type="SAM" id="MobiDB-lite"/>
    </source>
</evidence>
<evidence type="ECO:0000305" key="5"/>
<evidence type="ECO:0007744" key="6">
    <source>
    </source>
</evidence>
<organism>
    <name type="scientific">Rattus norvegicus</name>
    <name type="common">Rat</name>
    <dbReference type="NCBI Taxonomy" id="10116"/>
    <lineage>
        <taxon>Eukaryota</taxon>
        <taxon>Metazoa</taxon>
        <taxon>Chordata</taxon>
        <taxon>Craniata</taxon>
        <taxon>Vertebrata</taxon>
        <taxon>Euteleostomi</taxon>
        <taxon>Mammalia</taxon>
        <taxon>Eutheria</taxon>
        <taxon>Euarchontoglires</taxon>
        <taxon>Glires</taxon>
        <taxon>Rodentia</taxon>
        <taxon>Myomorpha</taxon>
        <taxon>Muroidea</taxon>
        <taxon>Muridae</taxon>
        <taxon>Murinae</taxon>
        <taxon>Rattus</taxon>
    </lineage>
</organism>
<dbReference type="EMBL" id="AJ000696">
    <property type="protein sequence ID" value="CAA04248.1"/>
    <property type="molecule type" value="mRNA"/>
</dbReference>
<dbReference type="RefSeq" id="NP_665884.1">
    <property type="nucleotide sequence ID" value="NM_145877.1"/>
</dbReference>
<dbReference type="SMR" id="O35787"/>
<dbReference type="FunCoup" id="O35787">
    <property type="interactions" value="626"/>
</dbReference>
<dbReference type="IntAct" id="O35787">
    <property type="interactions" value="1"/>
</dbReference>
<dbReference type="MINT" id="O35787"/>
<dbReference type="STRING" id="10116.ENSRNOP00000045754"/>
<dbReference type="iPTMnet" id="O35787"/>
<dbReference type="PhosphoSitePlus" id="O35787"/>
<dbReference type="jPOST" id="O35787"/>
<dbReference type="PaxDb" id="10116-ENSRNOP00000045754"/>
<dbReference type="GeneID" id="113886"/>
<dbReference type="KEGG" id="rno:113886"/>
<dbReference type="UCSC" id="RGD:70928">
    <property type="organism name" value="rat"/>
</dbReference>
<dbReference type="AGR" id="RGD:70928"/>
<dbReference type="CTD" id="10749"/>
<dbReference type="RGD" id="70928">
    <property type="gene designation" value="Kif1c"/>
</dbReference>
<dbReference type="eggNOG" id="KOG0245">
    <property type="taxonomic scope" value="Eukaryota"/>
</dbReference>
<dbReference type="InParanoid" id="O35787"/>
<dbReference type="PhylomeDB" id="O35787"/>
<dbReference type="Reactome" id="R-RNO-2132295">
    <property type="pathway name" value="MHC class II antigen presentation"/>
</dbReference>
<dbReference type="Reactome" id="R-RNO-6811434">
    <property type="pathway name" value="COPI-dependent Golgi-to-ER retrograde traffic"/>
</dbReference>
<dbReference type="Reactome" id="R-RNO-983189">
    <property type="pathway name" value="Kinesins"/>
</dbReference>
<dbReference type="PRO" id="PR:O35787"/>
<dbReference type="Proteomes" id="UP000002494">
    <property type="component" value="Unplaced"/>
</dbReference>
<dbReference type="GO" id="GO:0030424">
    <property type="term" value="C:axon"/>
    <property type="evidence" value="ECO:0000318"/>
    <property type="project" value="GO_Central"/>
</dbReference>
<dbReference type="GO" id="GO:1904115">
    <property type="term" value="C:axon cytoplasm"/>
    <property type="evidence" value="ECO:0007669"/>
    <property type="project" value="GOC"/>
</dbReference>
<dbReference type="GO" id="GO:0005737">
    <property type="term" value="C:cytoplasm"/>
    <property type="evidence" value="ECO:0000318"/>
    <property type="project" value="GO_Central"/>
</dbReference>
<dbReference type="GO" id="GO:0030425">
    <property type="term" value="C:dendrite"/>
    <property type="evidence" value="ECO:0000318"/>
    <property type="project" value="GO_Central"/>
</dbReference>
<dbReference type="GO" id="GO:0005794">
    <property type="term" value="C:Golgi apparatus"/>
    <property type="evidence" value="ECO:0000266"/>
    <property type="project" value="RGD"/>
</dbReference>
<dbReference type="GO" id="GO:0005871">
    <property type="term" value="C:kinesin complex"/>
    <property type="evidence" value="ECO:0000318"/>
    <property type="project" value="GO_Central"/>
</dbReference>
<dbReference type="GO" id="GO:0005874">
    <property type="term" value="C:microtubule"/>
    <property type="evidence" value="ECO:0000318"/>
    <property type="project" value="GO_Central"/>
</dbReference>
<dbReference type="GO" id="GO:0005875">
    <property type="term" value="C:microtubule associated complex"/>
    <property type="evidence" value="ECO:0000304"/>
    <property type="project" value="RGD"/>
</dbReference>
<dbReference type="GO" id="GO:0005524">
    <property type="term" value="F:ATP binding"/>
    <property type="evidence" value="ECO:0007669"/>
    <property type="project" value="UniProtKB-KW"/>
</dbReference>
<dbReference type="GO" id="GO:0016887">
    <property type="term" value="F:ATP hydrolysis activity"/>
    <property type="evidence" value="ECO:0000318"/>
    <property type="project" value="GO_Central"/>
</dbReference>
<dbReference type="GO" id="GO:0003774">
    <property type="term" value="F:cytoskeletal motor activity"/>
    <property type="evidence" value="ECO:0000304"/>
    <property type="project" value="RGD"/>
</dbReference>
<dbReference type="GO" id="GO:0008017">
    <property type="term" value="F:microtubule binding"/>
    <property type="evidence" value="ECO:0000318"/>
    <property type="project" value="GO_Central"/>
</dbReference>
<dbReference type="GO" id="GO:0008574">
    <property type="term" value="F:plus-end-directed microtubule motor activity"/>
    <property type="evidence" value="ECO:0000318"/>
    <property type="project" value="GO_Central"/>
</dbReference>
<dbReference type="GO" id="GO:1990048">
    <property type="term" value="P:anterograde neuronal dense core vesicle transport"/>
    <property type="evidence" value="ECO:0000316"/>
    <property type="project" value="ARUK-UCL"/>
</dbReference>
<dbReference type="GO" id="GO:0007017">
    <property type="term" value="P:microtubule-based process"/>
    <property type="evidence" value="ECO:0000304"/>
    <property type="project" value="RGD"/>
</dbReference>
<dbReference type="GO" id="GO:1990049">
    <property type="term" value="P:retrograde neuronal dense core vesicle transport"/>
    <property type="evidence" value="ECO:0000316"/>
    <property type="project" value="ARUK-UCL"/>
</dbReference>
<dbReference type="GO" id="GO:0006890">
    <property type="term" value="P:retrograde vesicle-mediated transport, Golgi to endoplasmic reticulum"/>
    <property type="evidence" value="ECO:0000266"/>
    <property type="project" value="RGD"/>
</dbReference>
<dbReference type="GO" id="GO:0016192">
    <property type="term" value="P:vesicle-mediated transport"/>
    <property type="evidence" value="ECO:0000318"/>
    <property type="project" value="GO_Central"/>
</dbReference>
<dbReference type="CDD" id="cd22728">
    <property type="entry name" value="FHA_KIF1C"/>
    <property type="match status" value="1"/>
</dbReference>
<dbReference type="CDD" id="cd01365">
    <property type="entry name" value="KISc_KIF1A_KIF1B"/>
    <property type="match status" value="1"/>
</dbReference>
<dbReference type="FunFam" id="2.60.200.20:FF:000001">
    <property type="entry name" value="Kinesin family member 1B"/>
    <property type="match status" value="1"/>
</dbReference>
<dbReference type="FunFam" id="3.40.850.10:FF:000004">
    <property type="entry name" value="Kinesin-like protein isoform 2"/>
    <property type="match status" value="1"/>
</dbReference>
<dbReference type="Gene3D" id="2.60.200.20">
    <property type="match status" value="1"/>
</dbReference>
<dbReference type="Gene3D" id="6.10.250.2520">
    <property type="match status" value="1"/>
</dbReference>
<dbReference type="Gene3D" id="3.40.850.10">
    <property type="entry name" value="Kinesin motor domain"/>
    <property type="match status" value="1"/>
</dbReference>
<dbReference type="InterPro" id="IPR000253">
    <property type="entry name" value="FHA_dom"/>
</dbReference>
<dbReference type="InterPro" id="IPR032405">
    <property type="entry name" value="Kinesin_assoc"/>
</dbReference>
<dbReference type="InterPro" id="IPR019821">
    <property type="entry name" value="Kinesin_motor_CS"/>
</dbReference>
<dbReference type="InterPro" id="IPR001752">
    <property type="entry name" value="Kinesin_motor_dom"/>
</dbReference>
<dbReference type="InterPro" id="IPR036961">
    <property type="entry name" value="Kinesin_motor_dom_sf"/>
</dbReference>
<dbReference type="InterPro" id="IPR027417">
    <property type="entry name" value="P-loop_NTPase"/>
</dbReference>
<dbReference type="InterPro" id="IPR008984">
    <property type="entry name" value="SMAD_FHA_dom_sf"/>
</dbReference>
<dbReference type="PANTHER" id="PTHR47117:SF9">
    <property type="entry name" value="KINESIN-LIKE PROTEIN KIF1C ISOFORM X1"/>
    <property type="match status" value="1"/>
</dbReference>
<dbReference type="PANTHER" id="PTHR47117">
    <property type="entry name" value="STAR-RELATED LIPID TRANSFER PROTEIN 9"/>
    <property type="match status" value="1"/>
</dbReference>
<dbReference type="Pfam" id="PF00498">
    <property type="entry name" value="FHA"/>
    <property type="match status" value="1"/>
</dbReference>
<dbReference type="Pfam" id="PF00225">
    <property type="entry name" value="Kinesin"/>
    <property type="match status" value="1"/>
</dbReference>
<dbReference type="Pfam" id="PF16183">
    <property type="entry name" value="Kinesin_assoc"/>
    <property type="match status" value="1"/>
</dbReference>
<dbReference type="PRINTS" id="PR00380">
    <property type="entry name" value="KINESINHEAVY"/>
</dbReference>
<dbReference type="SMART" id="SM00129">
    <property type="entry name" value="KISc"/>
    <property type="match status" value="1"/>
</dbReference>
<dbReference type="SUPFAM" id="SSF52540">
    <property type="entry name" value="P-loop containing nucleoside triphosphate hydrolases"/>
    <property type="match status" value="1"/>
</dbReference>
<dbReference type="SUPFAM" id="SSF49879">
    <property type="entry name" value="SMAD/FHA domain"/>
    <property type="match status" value="1"/>
</dbReference>
<dbReference type="PROSITE" id="PS00411">
    <property type="entry name" value="KINESIN_MOTOR_1"/>
    <property type="match status" value="1"/>
</dbReference>
<dbReference type="PROSITE" id="PS50067">
    <property type="entry name" value="KINESIN_MOTOR_2"/>
    <property type="match status" value="1"/>
</dbReference>
<reference key="1">
    <citation type="journal article" date="1998" name="Brain Res. Mol. Brain Res.">
        <title>The secretory epithelial cells of the choroid plexus employ a novel kinesin-related protein.</title>
        <authorList>
            <person name="Rogers K.R."/>
            <person name="Griffin M."/>
            <person name="Brophy P.J."/>
        </authorList>
    </citation>
    <scope>NUCLEOTIDE SEQUENCE [MRNA]</scope>
    <source>
        <strain>Wistar</strain>
    </source>
</reference>
<reference key="2">
    <citation type="journal article" date="2012" name="Nat. Commun.">
        <title>Quantitative maps of protein phosphorylation sites across 14 different rat organs and tissues.</title>
        <authorList>
            <person name="Lundby A."/>
            <person name="Secher A."/>
            <person name="Lage K."/>
            <person name="Nordsborg N.B."/>
            <person name="Dmytriyev A."/>
            <person name="Lundby C."/>
            <person name="Olsen J.V."/>
        </authorList>
    </citation>
    <scope>PHOSPHORYLATION [LARGE SCALE ANALYSIS] AT SER-671; SER-673 AND SER-1028</scope>
    <scope>IDENTIFICATION BY MASS SPECTROMETRY [LARGE SCALE ANALYSIS]</scope>
</reference>
<proteinExistence type="evidence at protein level"/>